<protein>
    <recommendedName>
        <fullName evidence="1">Glutaminase</fullName>
        <ecNumber evidence="1">3.5.1.2</ecNumber>
    </recommendedName>
</protein>
<reference key="1">
    <citation type="submission" date="2007-04" db="EMBL/GenBank/DDBJ databases">
        <title>Complete genome sequence of the nitrogen-fixing bacterium Azorhizobium caulinodans ORS571.</title>
        <authorList>
            <person name="Lee K.B."/>
            <person name="Backer P.D."/>
            <person name="Aono T."/>
            <person name="Liu C.T."/>
            <person name="Suzuki S."/>
            <person name="Suzuki T."/>
            <person name="Kaneko T."/>
            <person name="Yamada M."/>
            <person name="Tabata S."/>
            <person name="Kupfer D.M."/>
            <person name="Najar F.Z."/>
            <person name="Wiley G.B."/>
            <person name="Roe B."/>
            <person name="Binnewies T."/>
            <person name="Ussery D."/>
            <person name="Vereecke D."/>
            <person name="Gevers D."/>
            <person name="Holsters M."/>
            <person name="Oyaizu H."/>
        </authorList>
    </citation>
    <scope>NUCLEOTIDE SEQUENCE [LARGE SCALE GENOMIC DNA]</scope>
    <source>
        <strain>ATCC 43989 / DSM 5975 / JCM 20966 / LMG 6465 / NBRC 14845 / NCIMB 13405 / ORS 571</strain>
    </source>
</reference>
<dbReference type="EC" id="3.5.1.2" evidence="1"/>
<dbReference type="EMBL" id="AP009384">
    <property type="protein sequence ID" value="BAF89536.1"/>
    <property type="molecule type" value="Genomic_DNA"/>
</dbReference>
<dbReference type="RefSeq" id="WP_012172061.1">
    <property type="nucleotide sequence ID" value="NC_009937.1"/>
</dbReference>
<dbReference type="SMR" id="A8IEU9"/>
<dbReference type="STRING" id="438753.AZC_3538"/>
<dbReference type="KEGG" id="azc:AZC_3538"/>
<dbReference type="eggNOG" id="COG2066">
    <property type="taxonomic scope" value="Bacteria"/>
</dbReference>
<dbReference type="HOGENOM" id="CLU_027932_1_1_5"/>
<dbReference type="Proteomes" id="UP000000270">
    <property type="component" value="Chromosome"/>
</dbReference>
<dbReference type="GO" id="GO:0004359">
    <property type="term" value="F:glutaminase activity"/>
    <property type="evidence" value="ECO:0007669"/>
    <property type="project" value="UniProtKB-UniRule"/>
</dbReference>
<dbReference type="GO" id="GO:0006537">
    <property type="term" value="P:glutamate biosynthetic process"/>
    <property type="evidence" value="ECO:0007669"/>
    <property type="project" value="TreeGrafter"/>
</dbReference>
<dbReference type="GO" id="GO:0006543">
    <property type="term" value="P:glutamine catabolic process"/>
    <property type="evidence" value="ECO:0007669"/>
    <property type="project" value="TreeGrafter"/>
</dbReference>
<dbReference type="FunFam" id="3.40.710.10:FF:000005">
    <property type="entry name" value="Glutaminase"/>
    <property type="match status" value="1"/>
</dbReference>
<dbReference type="Gene3D" id="3.40.710.10">
    <property type="entry name" value="DD-peptidase/beta-lactamase superfamily"/>
    <property type="match status" value="1"/>
</dbReference>
<dbReference type="HAMAP" id="MF_00313">
    <property type="entry name" value="Glutaminase"/>
    <property type="match status" value="1"/>
</dbReference>
<dbReference type="InterPro" id="IPR012338">
    <property type="entry name" value="Beta-lactam/transpept-like"/>
</dbReference>
<dbReference type="InterPro" id="IPR015868">
    <property type="entry name" value="Glutaminase"/>
</dbReference>
<dbReference type="NCBIfam" id="TIGR03814">
    <property type="entry name" value="Gln_ase"/>
    <property type="match status" value="1"/>
</dbReference>
<dbReference type="NCBIfam" id="NF002133">
    <property type="entry name" value="PRK00971.1-2"/>
    <property type="match status" value="1"/>
</dbReference>
<dbReference type="PANTHER" id="PTHR12544">
    <property type="entry name" value="GLUTAMINASE"/>
    <property type="match status" value="1"/>
</dbReference>
<dbReference type="PANTHER" id="PTHR12544:SF29">
    <property type="entry name" value="GLUTAMINASE"/>
    <property type="match status" value="1"/>
</dbReference>
<dbReference type="Pfam" id="PF04960">
    <property type="entry name" value="Glutaminase"/>
    <property type="match status" value="1"/>
</dbReference>
<dbReference type="SUPFAM" id="SSF56601">
    <property type="entry name" value="beta-lactamase/transpeptidase-like"/>
    <property type="match status" value="1"/>
</dbReference>
<name>GLSA_AZOC5</name>
<evidence type="ECO:0000255" key="1">
    <source>
        <dbReference type="HAMAP-Rule" id="MF_00313"/>
    </source>
</evidence>
<gene>
    <name evidence="1" type="primary">glsA</name>
    <name type="ordered locus">AZC_3538</name>
</gene>
<proteinExistence type="inferred from homology"/>
<comment type="catalytic activity">
    <reaction evidence="1">
        <text>L-glutamine + H2O = L-glutamate + NH4(+)</text>
        <dbReference type="Rhea" id="RHEA:15889"/>
        <dbReference type="ChEBI" id="CHEBI:15377"/>
        <dbReference type="ChEBI" id="CHEBI:28938"/>
        <dbReference type="ChEBI" id="CHEBI:29985"/>
        <dbReference type="ChEBI" id="CHEBI:58359"/>
        <dbReference type="EC" id="3.5.1.2"/>
    </reaction>
</comment>
<comment type="subunit">
    <text evidence="1">Homotetramer.</text>
</comment>
<comment type="similarity">
    <text evidence="1">Belongs to the glutaminase family.</text>
</comment>
<accession>A8IEU9</accession>
<keyword id="KW-0378">Hydrolase</keyword>
<keyword id="KW-1185">Reference proteome</keyword>
<sequence>MPKLNDVVAEIAADLAKATERGAVATYIPMLAEVPINQFGMAVVTADGETILAGDADTVFSIQSISKVFTLTLALGQIGDALWTRVGKEPSGNAFNSIVQLEYEHGIPRNPFINAGAIVVADAMLSGHQPREALGAILRFVRFVAADESITIDEAVARSEKETGFRNTALANYMRSFGVLRHPVDHALGVYFHQCAIAMSCRHLARAGRYLAFSGRLTPEGPSVVASERARRIAALMLTCGHYDGSGDFAFRVGLPGKSGVGGGILAIAPGKASIAVWSPGLDPHGNSLLGSIALERLAKAMRWSVFAG</sequence>
<organism>
    <name type="scientific">Azorhizobium caulinodans (strain ATCC 43989 / DSM 5975 / JCM 20966 / LMG 6465 / NBRC 14845 / NCIMB 13405 / ORS 571)</name>
    <dbReference type="NCBI Taxonomy" id="438753"/>
    <lineage>
        <taxon>Bacteria</taxon>
        <taxon>Pseudomonadati</taxon>
        <taxon>Pseudomonadota</taxon>
        <taxon>Alphaproteobacteria</taxon>
        <taxon>Hyphomicrobiales</taxon>
        <taxon>Xanthobacteraceae</taxon>
        <taxon>Azorhizobium</taxon>
    </lineage>
</organism>
<feature type="chain" id="PRO_0000336024" description="Glutaminase">
    <location>
        <begin position="1"/>
        <end position="309"/>
    </location>
</feature>
<feature type="binding site" evidence="1">
    <location>
        <position position="64"/>
    </location>
    <ligand>
        <name>substrate</name>
    </ligand>
</feature>
<feature type="binding site" evidence="1">
    <location>
        <position position="114"/>
    </location>
    <ligand>
        <name>substrate</name>
    </ligand>
</feature>
<feature type="binding site" evidence="1">
    <location>
        <position position="160"/>
    </location>
    <ligand>
        <name>substrate</name>
    </ligand>
</feature>
<feature type="binding site" evidence="1">
    <location>
        <position position="167"/>
    </location>
    <ligand>
        <name>substrate</name>
    </ligand>
</feature>
<feature type="binding site" evidence="1">
    <location>
        <position position="191"/>
    </location>
    <ligand>
        <name>substrate</name>
    </ligand>
</feature>
<feature type="binding site" evidence="1">
    <location>
        <position position="243"/>
    </location>
    <ligand>
        <name>substrate</name>
    </ligand>
</feature>
<feature type="binding site" evidence="1">
    <location>
        <position position="261"/>
    </location>
    <ligand>
        <name>substrate</name>
    </ligand>
</feature>